<proteinExistence type="evidence at protein level"/>
<protein>
    <recommendedName>
        <fullName evidence="1">Large-conductance mechanosensitive channel</fullName>
    </recommendedName>
</protein>
<evidence type="ECO:0000255" key="1">
    <source>
        <dbReference type="HAMAP-Rule" id="MF_00115"/>
    </source>
</evidence>
<evidence type="ECO:0000256" key="2">
    <source>
        <dbReference type="SAM" id="MobiDB-lite"/>
    </source>
</evidence>
<evidence type="ECO:0000269" key="3">
    <source>
    </source>
</evidence>
<evidence type="ECO:0000269" key="4">
    <source>
    </source>
</evidence>
<evidence type="ECO:0000305" key="5"/>
<evidence type="ECO:0000305" key="6">
    <source>
    </source>
</evidence>
<evidence type="ECO:0007829" key="7">
    <source>
        <dbReference type="PDB" id="2OAR"/>
    </source>
</evidence>
<reference key="1">
    <citation type="journal article" date="1998" name="Nature">
        <title>Deciphering the biology of Mycobacterium tuberculosis from the complete genome sequence.</title>
        <authorList>
            <person name="Cole S.T."/>
            <person name="Brosch R."/>
            <person name="Parkhill J."/>
            <person name="Garnier T."/>
            <person name="Churcher C.M."/>
            <person name="Harris D.E."/>
            <person name="Gordon S.V."/>
            <person name="Eiglmeier K."/>
            <person name="Gas S."/>
            <person name="Barry C.E. III"/>
            <person name="Tekaia F."/>
            <person name="Badcock K."/>
            <person name="Basham D."/>
            <person name="Brown D."/>
            <person name="Chillingworth T."/>
            <person name="Connor R."/>
            <person name="Davies R.M."/>
            <person name="Devlin K."/>
            <person name="Feltwell T."/>
            <person name="Gentles S."/>
            <person name="Hamlin N."/>
            <person name="Holroyd S."/>
            <person name="Hornsby T."/>
            <person name="Jagels K."/>
            <person name="Krogh A."/>
            <person name="McLean J."/>
            <person name="Moule S."/>
            <person name="Murphy L.D."/>
            <person name="Oliver S."/>
            <person name="Osborne J."/>
            <person name="Quail M.A."/>
            <person name="Rajandream M.A."/>
            <person name="Rogers J."/>
            <person name="Rutter S."/>
            <person name="Seeger K."/>
            <person name="Skelton S."/>
            <person name="Squares S."/>
            <person name="Squares R."/>
            <person name="Sulston J.E."/>
            <person name="Taylor K."/>
            <person name="Whitehead S."/>
            <person name="Barrell B.G."/>
        </authorList>
    </citation>
    <scope>NUCLEOTIDE SEQUENCE [LARGE SCALE GENOMIC DNA]</scope>
    <source>
        <strain>ATCC 25618 / H37Rv</strain>
    </source>
</reference>
<reference key="2">
    <citation type="journal article" date="2011" name="Mol. Cell. Proteomics">
        <title>Proteogenomic analysis of Mycobacterium tuberculosis by high resolution mass spectrometry.</title>
        <authorList>
            <person name="Kelkar D.S."/>
            <person name="Kumar D."/>
            <person name="Kumar P."/>
            <person name="Balakrishnan L."/>
            <person name="Muthusamy B."/>
            <person name="Yadav A.K."/>
            <person name="Shrivastava P."/>
            <person name="Marimuthu A."/>
            <person name="Anand S."/>
            <person name="Sundaram H."/>
            <person name="Kingsbury R."/>
            <person name="Harsha H.C."/>
            <person name="Nair B."/>
            <person name="Prasad T.S."/>
            <person name="Chauhan D.S."/>
            <person name="Katoch K."/>
            <person name="Katoch V.M."/>
            <person name="Kumar P."/>
            <person name="Chaerkady R."/>
            <person name="Ramachandran S."/>
            <person name="Dash D."/>
            <person name="Pandey A."/>
        </authorList>
    </citation>
    <scope>IDENTIFICATION BY MASS SPECTROMETRY [LARGE SCALE ANALYSIS]</scope>
    <source>
        <strain>ATCC 25618 / H37Rv</strain>
    </source>
</reference>
<reference key="3">
    <citation type="journal article" date="2013" name="Biochemistry">
        <title>Phosphatidylinositol is crucial for the mechanosensitivity of Mycobacterium tuberculosis MscL.</title>
        <authorList>
            <person name="Zhong D."/>
            <person name="Blount P."/>
        </authorList>
    </citation>
    <scope>FUNCTION</scope>
    <scope>SUBCELLULAR LOCATION</scope>
</reference>
<reference key="4">
    <citation type="journal article" date="1998" name="Science">
        <title>Structure of the MscL homolog from Mycobacterium tuberculosis: a gated mechanosensitive ion channel.</title>
        <authorList>
            <person name="Chang G."/>
            <person name="Spencer R.H."/>
            <person name="Lee A.T."/>
            <person name="Barclay M.T."/>
            <person name="Rees D.C."/>
        </authorList>
    </citation>
    <scope>X-RAY CRYSTALLOGRAPHY (3.5 ANGSTROMS) OF 10-118</scope>
    <scope>SUBUNIT</scope>
    <scope>SUBCELLULAR LOCATION</scope>
    <scope>TOPOLOGY</scope>
    <source>
        <strain>ATCC 25618 / H37Rv</strain>
    </source>
</reference>
<accession>P9WJN5</accession>
<accession>L0T5D5</accession>
<accession>O53898</accession>
<accession>P0A5K8</accession>
<dbReference type="EMBL" id="AL123456">
    <property type="protein sequence ID" value="CCP43735.1"/>
    <property type="molecule type" value="Genomic_DNA"/>
</dbReference>
<dbReference type="PIR" id="E70821">
    <property type="entry name" value="E70821"/>
</dbReference>
<dbReference type="RefSeq" id="NP_215500.1">
    <property type="nucleotide sequence ID" value="NC_000962.3"/>
</dbReference>
<dbReference type="RefSeq" id="WP_003405128.1">
    <property type="nucleotide sequence ID" value="NZ_NVQJ01000018.1"/>
</dbReference>
<dbReference type="PDB" id="2OAR">
    <property type="method" value="X-ray"/>
    <property type="resolution" value="3.50 A"/>
    <property type="chains" value="A/B/C/D/E=1-151"/>
</dbReference>
<dbReference type="PDB" id="6CTD">
    <property type="method" value="X-ray"/>
    <property type="resolution" value="5.80 A"/>
    <property type="chains" value="A/B/C/D/E/F/G/H/I/J=1-101"/>
</dbReference>
<dbReference type="PDBsum" id="2OAR"/>
<dbReference type="PDBsum" id="6CTD"/>
<dbReference type="SMR" id="P9WJN5"/>
<dbReference type="FunCoup" id="P9WJN5">
    <property type="interactions" value="26"/>
</dbReference>
<dbReference type="STRING" id="83332.Rv0985c"/>
<dbReference type="PaxDb" id="83332-Rv0985c"/>
<dbReference type="DNASU" id="885368"/>
<dbReference type="GeneID" id="885368"/>
<dbReference type="KEGG" id="mtu:Rv0985c"/>
<dbReference type="KEGG" id="mtv:RVBD_0985c"/>
<dbReference type="TubercuList" id="Rv0985c"/>
<dbReference type="eggNOG" id="COG1970">
    <property type="taxonomic scope" value="Bacteria"/>
</dbReference>
<dbReference type="InParanoid" id="P9WJN5"/>
<dbReference type="OrthoDB" id="9810350at2"/>
<dbReference type="PhylomeDB" id="P9WJN5"/>
<dbReference type="Proteomes" id="UP000001584">
    <property type="component" value="Chromosome"/>
</dbReference>
<dbReference type="GO" id="GO:0016020">
    <property type="term" value="C:membrane"/>
    <property type="evidence" value="ECO:0000318"/>
    <property type="project" value="GO_Central"/>
</dbReference>
<dbReference type="GO" id="GO:0005886">
    <property type="term" value="C:plasma membrane"/>
    <property type="evidence" value="ECO:0007005"/>
    <property type="project" value="MTBBASE"/>
</dbReference>
<dbReference type="GO" id="GO:0022836">
    <property type="term" value="F:gated channel activity"/>
    <property type="evidence" value="ECO:0000314"/>
    <property type="project" value="MTBBASE"/>
</dbReference>
<dbReference type="GO" id="GO:0042802">
    <property type="term" value="F:identical protein binding"/>
    <property type="evidence" value="ECO:0000353"/>
    <property type="project" value="IntAct"/>
</dbReference>
<dbReference type="GO" id="GO:0008381">
    <property type="term" value="F:mechanosensitive monoatomic ion channel activity"/>
    <property type="evidence" value="ECO:0000314"/>
    <property type="project" value="MTBBASE"/>
</dbReference>
<dbReference type="GO" id="GO:0006811">
    <property type="term" value="P:monoatomic ion transport"/>
    <property type="evidence" value="ECO:0000318"/>
    <property type="project" value="GO_Central"/>
</dbReference>
<dbReference type="GO" id="GO:0055085">
    <property type="term" value="P:transmembrane transport"/>
    <property type="evidence" value="ECO:0000314"/>
    <property type="project" value="MTBBASE"/>
</dbReference>
<dbReference type="FunFam" id="1.10.1200.120:FF:000006">
    <property type="entry name" value="Large-conductance mechanosensitive channel"/>
    <property type="match status" value="1"/>
</dbReference>
<dbReference type="Gene3D" id="1.20.5.220">
    <property type="match status" value="1"/>
</dbReference>
<dbReference type="Gene3D" id="1.10.1200.120">
    <property type="entry name" value="Large-conductance mechanosensitive channel, MscL, domain 1"/>
    <property type="match status" value="1"/>
</dbReference>
<dbReference type="HAMAP" id="MF_00115">
    <property type="entry name" value="MscL"/>
    <property type="match status" value="1"/>
</dbReference>
<dbReference type="InterPro" id="IPR019823">
    <property type="entry name" value="Mechanosensitive_channel_CS"/>
</dbReference>
<dbReference type="InterPro" id="IPR001185">
    <property type="entry name" value="MS_channel"/>
</dbReference>
<dbReference type="InterPro" id="IPR037673">
    <property type="entry name" value="MSC/AndL"/>
</dbReference>
<dbReference type="InterPro" id="IPR036019">
    <property type="entry name" value="MscL_channel"/>
</dbReference>
<dbReference type="NCBIfam" id="TIGR00220">
    <property type="entry name" value="mscL"/>
    <property type="match status" value="1"/>
</dbReference>
<dbReference type="NCBIfam" id="NF001842">
    <property type="entry name" value="PRK00567.1-3"/>
    <property type="match status" value="1"/>
</dbReference>
<dbReference type="PANTHER" id="PTHR30266:SF2">
    <property type="entry name" value="LARGE-CONDUCTANCE MECHANOSENSITIVE CHANNEL"/>
    <property type="match status" value="1"/>
</dbReference>
<dbReference type="PANTHER" id="PTHR30266">
    <property type="entry name" value="MECHANOSENSITIVE CHANNEL MSCL"/>
    <property type="match status" value="1"/>
</dbReference>
<dbReference type="Pfam" id="PF01741">
    <property type="entry name" value="MscL"/>
    <property type="match status" value="1"/>
</dbReference>
<dbReference type="PRINTS" id="PR01264">
    <property type="entry name" value="MECHCHANNEL"/>
</dbReference>
<dbReference type="SUPFAM" id="SSF81330">
    <property type="entry name" value="Gated mechanosensitive channel"/>
    <property type="match status" value="1"/>
</dbReference>
<dbReference type="PROSITE" id="PS01327">
    <property type="entry name" value="MSCL"/>
    <property type="match status" value="1"/>
</dbReference>
<keyword id="KW-0002">3D-structure</keyword>
<keyword id="KW-1003">Cell membrane</keyword>
<keyword id="KW-0407">Ion channel</keyword>
<keyword id="KW-0406">Ion transport</keyword>
<keyword id="KW-0472">Membrane</keyword>
<keyword id="KW-1185">Reference proteome</keyword>
<keyword id="KW-0812">Transmembrane</keyword>
<keyword id="KW-1133">Transmembrane helix</keyword>
<keyword id="KW-0813">Transport</keyword>
<comment type="function">
    <text evidence="3">Channel that opens in response to stretch forces in the membrane lipid bilayer. The force required to trigger channel opening depends on the nature of the membrane lipids; the presence of phosphatidylinositol enhances mechanosensitivity of the channel. May participate in the regulation of osmotic pressure changes within the cell.</text>
</comment>
<comment type="subunit">
    <text evidence="1 4">Homopentamer.</text>
</comment>
<comment type="interaction">
    <interactant intactId="EBI-15799854">
        <id>P9WJN5</id>
    </interactant>
    <interactant intactId="EBI-15799854">
        <id>P9WJN5</id>
        <label>mscL</label>
    </interactant>
    <organismsDiffer>false</organismsDiffer>
    <experiments>2</experiments>
</comment>
<comment type="subcellular location">
    <subcellularLocation>
        <location evidence="1 3 6">Cell membrane</location>
        <topology evidence="1 4">Multi-pass membrane protein</topology>
    </subcellularLocation>
</comment>
<comment type="miscellaneous">
    <text evidence="3">E.coli inner membranes are often used to measure the activity of heterologously expressed channels, but the lipid composition of E.coli membranes differs considerably from that of M.tuberculosis. Phosphatidylinositol is one of the major constituents of M.tuberculosis membranes, but not of E.coli membranes, and this affects channel activity.</text>
</comment>
<comment type="similarity">
    <text evidence="1 5">Belongs to the MscL family.</text>
</comment>
<sequence>MLKGFKEFLARGNIVDLAVAVVIGTAFTALVTKFTDSIITPLINRIGVNAQSDVGILRIGIGGGQTIDLNVLLSAAINFFLIAFAVYFLVVLPYNTLRKKGEVEQPGDTQVVLLTEIRDLLAQTNGDSPGRHGGRGTPSPTDGPRASTESQ</sequence>
<gene>
    <name evidence="1" type="primary">mscL</name>
    <name type="ordered locus">Rv0985c</name>
    <name type="ORF">MTV044.13c</name>
</gene>
<feature type="chain" id="PRO_0000192452" description="Large-conductance mechanosensitive channel">
    <location>
        <begin position="1"/>
        <end position="151"/>
    </location>
</feature>
<feature type="topological domain" description="Cytoplasmic" evidence="4">
    <location>
        <begin position="1"/>
        <end position="14"/>
    </location>
</feature>
<feature type="transmembrane region" description="Helical" evidence="4">
    <location>
        <begin position="15"/>
        <end position="43"/>
    </location>
</feature>
<feature type="topological domain" description="Extracellular" evidence="4">
    <location>
        <begin position="44"/>
        <end position="68"/>
    </location>
</feature>
<feature type="transmembrane region" description="Helical" evidence="4">
    <location>
        <begin position="69"/>
        <end position="89"/>
    </location>
</feature>
<feature type="topological domain" description="Cytoplasmic" evidence="4">
    <location>
        <begin position="90"/>
        <end position="151"/>
    </location>
</feature>
<feature type="region of interest" description="Disordered" evidence="2">
    <location>
        <begin position="122"/>
        <end position="151"/>
    </location>
</feature>
<feature type="helix" evidence="7">
    <location>
        <begin position="2"/>
        <end position="10"/>
    </location>
</feature>
<feature type="helix" evidence="7">
    <location>
        <begin position="13"/>
        <end position="46"/>
    </location>
</feature>
<feature type="strand" evidence="7">
    <location>
        <begin position="51"/>
        <end position="53"/>
    </location>
</feature>
<feature type="strand" evidence="7">
    <location>
        <begin position="65"/>
        <end position="67"/>
    </location>
</feature>
<feature type="helix" evidence="7">
    <location>
        <begin position="69"/>
        <end position="89"/>
    </location>
</feature>
<feature type="helix" evidence="7">
    <location>
        <begin position="91"/>
        <end position="99"/>
    </location>
</feature>
<feature type="helix" evidence="7">
    <location>
        <begin position="106"/>
        <end position="123"/>
    </location>
</feature>
<name>MSCL_MYCTU</name>
<organism>
    <name type="scientific">Mycobacterium tuberculosis (strain ATCC 25618 / H37Rv)</name>
    <dbReference type="NCBI Taxonomy" id="83332"/>
    <lineage>
        <taxon>Bacteria</taxon>
        <taxon>Bacillati</taxon>
        <taxon>Actinomycetota</taxon>
        <taxon>Actinomycetes</taxon>
        <taxon>Mycobacteriales</taxon>
        <taxon>Mycobacteriaceae</taxon>
        <taxon>Mycobacterium</taxon>
        <taxon>Mycobacterium tuberculosis complex</taxon>
    </lineage>
</organism>